<organism>
    <name type="scientific">Cyriopagopus hainanus</name>
    <name type="common">Chinese bird spider</name>
    <name type="synonym">Haplopelma hainanum</name>
    <dbReference type="NCBI Taxonomy" id="209901"/>
    <lineage>
        <taxon>Eukaryota</taxon>
        <taxon>Metazoa</taxon>
        <taxon>Ecdysozoa</taxon>
        <taxon>Arthropoda</taxon>
        <taxon>Chelicerata</taxon>
        <taxon>Arachnida</taxon>
        <taxon>Araneae</taxon>
        <taxon>Mygalomorphae</taxon>
        <taxon>Theraphosidae</taxon>
        <taxon>Haplopelma</taxon>
    </lineage>
</organism>
<dbReference type="EMBL" id="GU293047">
    <property type="protein sequence ID" value="ADB56863.1"/>
    <property type="molecule type" value="mRNA"/>
</dbReference>
<dbReference type="SMR" id="D2Y2H0"/>
<dbReference type="ArachnoServer" id="AS001745">
    <property type="toxin name" value="U13-theraphotoxin-Hhn1a"/>
</dbReference>
<dbReference type="GO" id="GO:0005576">
    <property type="term" value="C:extracellular region"/>
    <property type="evidence" value="ECO:0007669"/>
    <property type="project" value="UniProtKB-SubCell"/>
</dbReference>
<dbReference type="GO" id="GO:0015459">
    <property type="term" value="F:potassium channel regulator activity"/>
    <property type="evidence" value="ECO:0007669"/>
    <property type="project" value="UniProtKB-KW"/>
</dbReference>
<dbReference type="GO" id="GO:0090729">
    <property type="term" value="F:toxin activity"/>
    <property type="evidence" value="ECO:0007669"/>
    <property type="project" value="UniProtKB-KW"/>
</dbReference>
<name>H20A2_CYRHA</name>
<accession>D2Y2H0</accession>
<keyword id="KW-1015">Disulfide bond</keyword>
<keyword id="KW-0872">Ion channel impairing toxin</keyword>
<keyword id="KW-0960">Knottin</keyword>
<keyword id="KW-0632">Potassium channel impairing toxin</keyword>
<keyword id="KW-0964">Secreted</keyword>
<keyword id="KW-0732">Signal</keyword>
<keyword id="KW-0800">Toxin</keyword>
<keyword id="KW-1220">Voltage-gated potassium channel impairing toxin</keyword>
<comment type="function">
    <text evidence="3">Moderately inhibits Kv1.1/KCNA1 and Kv1.2/KCNA2 and weakly inhibits Kv1.3/KCNA3, and Kv2.1/KCNB1 voltage-gated potassium channels (PubMed:29483648).</text>
</comment>
<comment type="subcellular location">
    <subcellularLocation>
        <location evidence="1">Secreted</location>
    </subcellularLocation>
</comment>
<comment type="tissue specificity">
    <text>Expressed by the venom gland.</text>
</comment>
<comment type="domain">
    <text evidence="1">The presence of a 'disulfide through disulfide knot' structurally defines this protein as a knottin.</text>
</comment>
<comment type="similarity">
    <text>Belongs to the hainantoxin family. 20 subfamily.</text>
</comment>
<evidence type="ECO:0000250" key="1"/>
<evidence type="ECO:0000255" key="2"/>
<evidence type="ECO:0000269" key="3">
    <source>
    </source>
</evidence>
<reference key="1">
    <citation type="journal article" date="2010" name="J. Proteome Res.">
        <title>Molecular diversification of peptide toxins from the tarantula Haplopelma hainanum (Ornithoctonus hainana) venom based on transcriptomic, peptidomic, and genomic analyses.</title>
        <authorList>
            <person name="Tang X."/>
            <person name="Zhang Y."/>
            <person name="Hu W."/>
            <person name="Xu D."/>
            <person name="Tao H."/>
            <person name="Yang X."/>
            <person name="Li Y."/>
            <person name="Jiang L."/>
            <person name="Liang S."/>
        </authorList>
    </citation>
    <scope>NUCLEOTIDE SEQUENCE [LARGE SCALE MRNA]</scope>
    <source>
        <tissue>Venom gland</tissue>
    </source>
</reference>
<reference key="2">
    <citation type="journal article" date="2018" name="Nat. Struct. Mol. Biol.">
        <title>Screening, large-scale production and structure-based classification of cystine-dense peptides.</title>
        <authorList>
            <person name="Correnti C.E."/>
            <person name="Gewe M.M."/>
            <person name="Mehlin C."/>
            <person name="Bandaranayake A.D."/>
            <person name="Johnsen W.A."/>
            <person name="Rupert P.B."/>
            <person name="Brusniak M.Y."/>
            <person name="Clarke M."/>
            <person name="Burke S.E."/>
            <person name="De Van Der Schueren W."/>
            <person name="Pilat K."/>
            <person name="Turnbaugh S.M."/>
            <person name="May D."/>
            <person name="Watson A."/>
            <person name="Chan M.K."/>
            <person name="Bahl C.D."/>
            <person name="Olson J.M."/>
            <person name="Strong R.K."/>
        </authorList>
    </citation>
    <scope>FUNCTION</scope>
    <scope>SYNTHESIS OF 48-78</scope>
</reference>
<protein>
    <recommendedName>
        <fullName>Hainantoxin-XX.2</fullName>
        <shortName>HNTX-XX.2</shortName>
    </recommendedName>
    <alternativeName>
        <fullName>Peptide F8-26.11</fullName>
    </alternativeName>
</protein>
<feature type="signal peptide" evidence="2">
    <location>
        <begin position="1"/>
        <end position="23"/>
    </location>
</feature>
<feature type="propeptide" id="PRO_0000401053" evidence="1">
    <location>
        <begin position="24"/>
        <end position="47"/>
    </location>
</feature>
<feature type="peptide" id="PRO_0000401054" description="Hainantoxin-XX.2">
    <location>
        <begin position="48"/>
        <end position="78"/>
    </location>
</feature>
<feature type="disulfide bond" evidence="1">
    <location>
        <begin position="49"/>
        <end position="62"/>
    </location>
</feature>
<feature type="disulfide bond" evidence="1">
    <location>
        <begin position="56"/>
        <end position="66"/>
    </location>
</feature>
<feature type="disulfide bond" evidence="1">
    <location>
        <begin position="61"/>
        <end position="77"/>
    </location>
</feature>
<sequence>MKSATLLALSYLLIALYFLICEAEHSRYEEHEILEENMGDVVNLEQRSCAKPGEMCMRIKCCDGQCGCNRGTGRCFCK</sequence>
<proteinExistence type="evidence at transcript level"/>